<accession>B1KRQ3</accession>
<proteinExistence type="inferred from homology"/>
<protein>
    <recommendedName>
        <fullName evidence="1">Peptide chain release factor 3</fullName>
        <shortName evidence="1">RF-3</shortName>
    </recommendedName>
</protein>
<gene>
    <name evidence="1" type="primary">prfC</name>
    <name type="ordered locus">Swoo_3554</name>
</gene>
<name>RF3_SHEWM</name>
<organism>
    <name type="scientific">Shewanella woodyi (strain ATCC 51908 / MS32)</name>
    <dbReference type="NCBI Taxonomy" id="392500"/>
    <lineage>
        <taxon>Bacteria</taxon>
        <taxon>Pseudomonadati</taxon>
        <taxon>Pseudomonadota</taxon>
        <taxon>Gammaproteobacteria</taxon>
        <taxon>Alteromonadales</taxon>
        <taxon>Shewanellaceae</taxon>
        <taxon>Shewanella</taxon>
    </lineage>
</organism>
<evidence type="ECO:0000255" key="1">
    <source>
        <dbReference type="HAMAP-Rule" id="MF_00072"/>
    </source>
</evidence>
<sequence length="526" mass="59308">MSGNKVEVDKRRTFAIISHPDAGKTTITEKVLLFGNALQKAGTVKGKKSGQHAKSDWMEMEKDRGISITTSVMQFPYNDALVNLLDTPGHEDFSEDTYRTLTAVDSCLMVIDSAKGVEQRTIKLMEVTRLRDTPIVTFMNKLDRDIRDPLELMDEVEEVLNIACAPITWPISSGKEFKGVYHLLRDEVILYQSGQGHTIQDSRIIKGLNNPELDEAIGAYAAEVREELELVLGASNEFDLEMFLAGELTPVFFGTALGNFGVDHILDGIVEWAPKPQARETEVRDIQPEDEKFSGFVFKIQANMDPKHRDRVAFMRICSGRYEQGMKMHHVRLGKDVNVSDALTFMAGDRNRAEVAYPGDIIGLHNHGTMRIGDTFTQGEKFRFTGIPNFAPEMFRRIRLKDPLKQKQLLKGLVQLSEEGAVQVFRPIDSNDLIVGAVGVLQFEVVVGRLKSEYKVEAIYEGISVATARWVYCDDERKLEEFRRKCSNNLALDGGDNLTYIAPTMVNLNLSMERYPDIQFAKTREN</sequence>
<feature type="chain" id="PRO_1000092501" description="Peptide chain release factor 3">
    <location>
        <begin position="1"/>
        <end position="526"/>
    </location>
</feature>
<feature type="domain" description="tr-type G">
    <location>
        <begin position="9"/>
        <end position="277"/>
    </location>
</feature>
<feature type="binding site" evidence="1">
    <location>
        <begin position="18"/>
        <end position="25"/>
    </location>
    <ligand>
        <name>GTP</name>
        <dbReference type="ChEBI" id="CHEBI:37565"/>
    </ligand>
</feature>
<feature type="binding site" evidence="1">
    <location>
        <begin position="86"/>
        <end position="90"/>
    </location>
    <ligand>
        <name>GTP</name>
        <dbReference type="ChEBI" id="CHEBI:37565"/>
    </ligand>
</feature>
<feature type="binding site" evidence="1">
    <location>
        <begin position="140"/>
        <end position="143"/>
    </location>
    <ligand>
        <name>GTP</name>
        <dbReference type="ChEBI" id="CHEBI:37565"/>
    </ligand>
</feature>
<comment type="function">
    <text evidence="1">Increases the formation of ribosomal termination complexes and stimulates activities of RF-1 and RF-2. It binds guanine nucleotides and has strong preference for UGA stop codons. It may interact directly with the ribosome. The stimulation of RF-1 and RF-2 is significantly reduced by GTP and GDP, but not by GMP.</text>
</comment>
<comment type="subcellular location">
    <subcellularLocation>
        <location evidence="1">Cytoplasm</location>
    </subcellularLocation>
</comment>
<comment type="similarity">
    <text evidence="1">Belongs to the TRAFAC class translation factor GTPase superfamily. Classic translation factor GTPase family. PrfC subfamily.</text>
</comment>
<dbReference type="EMBL" id="CP000961">
    <property type="protein sequence ID" value="ACA87818.1"/>
    <property type="molecule type" value="Genomic_DNA"/>
</dbReference>
<dbReference type="RefSeq" id="WP_012326151.1">
    <property type="nucleotide sequence ID" value="NC_010506.1"/>
</dbReference>
<dbReference type="SMR" id="B1KRQ3"/>
<dbReference type="STRING" id="392500.Swoo_3554"/>
<dbReference type="KEGG" id="swd:Swoo_3554"/>
<dbReference type="eggNOG" id="COG4108">
    <property type="taxonomic scope" value="Bacteria"/>
</dbReference>
<dbReference type="HOGENOM" id="CLU_002794_2_1_6"/>
<dbReference type="Proteomes" id="UP000002168">
    <property type="component" value="Chromosome"/>
</dbReference>
<dbReference type="GO" id="GO:0005829">
    <property type="term" value="C:cytosol"/>
    <property type="evidence" value="ECO:0007669"/>
    <property type="project" value="TreeGrafter"/>
</dbReference>
<dbReference type="GO" id="GO:0005525">
    <property type="term" value="F:GTP binding"/>
    <property type="evidence" value="ECO:0007669"/>
    <property type="project" value="UniProtKB-UniRule"/>
</dbReference>
<dbReference type="GO" id="GO:0003924">
    <property type="term" value="F:GTPase activity"/>
    <property type="evidence" value="ECO:0007669"/>
    <property type="project" value="InterPro"/>
</dbReference>
<dbReference type="GO" id="GO:0097216">
    <property type="term" value="F:guanosine tetraphosphate binding"/>
    <property type="evidence" value="ECO:0007669"/>
    <property type="project" value="UniProtKB-ARBA"/>
</dbReference>
<dbReference type="GO" id="GO:0016150">
    <property type="term" value="F:translation release factor activity, codon nonspecific"/>
    <property type="evidence" value="ECO:0007669"/>
    <property type="project" value="TreeGrafter"/>
</dbReference>
<dbReference type="GO" id="GO:0016149">
    <property type="term" value="F:translation release factor activity, codon specific"/>
    <property type="evidence" value="ECO:0007669"/>
    <property type="project" value="UniProtKB-UniRule"/>
</dbReference>
<dbReference type="GO" id="GO:0006449">
    <property type="term" value="P:regulation of translational termination"/>
    <property type="evidence" value="ECO:0007669"/>
    <property type="project" value="UniProtKB-UniRule"/>
</dbReference>
<dbReference type="CDD" id="cd04169">
    <property type="entry name" value="RF3"/>
    <property type="match status" value="1"/>
</dbReference>
<dbReference type="CDD" id="cd03689">
    <property type="entry name" value="RF3_II"/>
    <property type="match status" value="1"/>
</dbReference>
<dbReference type="CDD" id="cd16259">
    <property type="entry name" value="RF3_III"/>
    <property type="match status" value="1"/>
</dbReference>
<dbReference type="FunFam" id="2.40.30.10:FF:000040">
    <property type="entry name" value="Peptide chain release factor 3"/>
    <property type="match status" value="1"/>
</dbReference>
<dbReference type="FunFam" id="3.30.70.3280:FF:000001">
    <property type="entry name" value="Peptide chain release factor 3"/>
    <property type="match status" value="1"/>
</dbReference>
<dbReference type="FunFam" id="3.40.50.300:FF:000542">
    <property type="entry name" value="Peptide chain release factor 3"/>
    <property type="match status" value="1"/>
</dbReference>
<dbReference type="Gene3D" id="3.40.50.300">
    <property type="entry name" value="P-loop containing nucleotide triphosphate hydrolases"/>
    <property type="match status" value="2"/>
</dbReference>
<dbReference type="Gene3D" id="3.30.70.3280">
    <property type="entry name" value="Peptide chain release factor 3, domain III"/>
    <property type="match status" value="1"/>
</dbReference>
<dbReference type="HAMAP" id="MF_00072">
    <property type="entry name" value="Rel_fac_3"/>
    <property type="match status" value="1"/>
</dbReference>
<dbReference type="InterPro" id="IPR053905">
    <property type="entry name" value="EF-G-like_DII"/>
</dbReference>
<dbReference type="InterPro" id="IPR035647">
    <property type="entry name" value="EFG_III/V"/>
</dbReference>
<dbReference type="InterPro" id="IPR031157">
    <property type="entry name" value="G_TR_CS"/>
</dbReference>
<dbReference type="InterPro" id="IPR027417">
    <property type="entry name" value="P-loop_NTPase"/>
</dbReference>
<dbReference type="InterPro" id="IPR004548">
    <property type="entry name" value="PrfC"/>
</dbReference>
<dbReference type="InterPro" id="IPR032090">
    <property type="entry name" value="RF3_C"/>
</dbReference>
<dbReference type="InterPro" id="IPR038467">
    <property type="entry name" value="RF3_dom_3_sf"/>
</dbReference>
<dbReference type="InterPro" id="IPR041732">
    <property type="entry name" value="RF3_GTP-bd"/>
</dbReference>
<dbReference type="InterPro" id="IPR005225">
    <property type="entry name" value="Small_GTP-bd"/>
</dbReference>
<dbReference type="InterPro" id="IPR000795">
    <property type="entry name" value="T_Tr_GTP-bd_dom"/>
</dbReference>
<dbReference type="InterPro" id="IPR009000">
    <property type="entry name" value="Transl_B-barrel_sf"/>
</dbReference>
<dbReference type="NCBIfam" id="TIGR00503">
    <property type="entry name" value="prfC"/>
    <property type="match status" value="1"/>
</dbReference>
<dbReference type="NCBIfam" id="NF001964">
    <property type="entry name" value="PRK00741.1"/>
    <property type="match status" value="1"/>
</dbReference>
<dbReference type="NCBIfam" id="TIGR00231">
    <property type="entry name" value="small_GTP"/>
    <property type="match status" value="1"/>
</dbReference>
<dbReference type="PANTHER" id="PTHR43556">
    <property type="entry name" value="PEPTIDE CHAIN RELEASE FACTOR RF3"/>
    <property type="match status" value="1"/>
</dbReference>
<dbReference type="PANTHER" id="PTHR43556:SF2">
    <property type="entry name" value="PEPTIDE CHAIN RELEASE FACTOR RF3"/>
    <property type="match status" value="1"/>
</dbReference>
<dbReference type="Pfam" id="PF22042">
    <property type="entry name" value="EF-G_D2"/>
    <property type="match status" value="1"/>
</dbReference>
<dbReference type="Pfam" id="PF00009">
    <property type="entry name" value="GTP_EFTU"/>
    <property type="match status" value="1"/>
</dbReference>
<dbReference type="Pfam" id="PF16658">
    <property type="entry name" value="RF3_C"/>
    <property type="match status" value="1"/>
</dbReference>
<dbReference type="PRINTS" id="PR00315">
    <property type="entry name" value="ELONGATNFCT"/>
</dbReference>
<dbReference type="SUPFAM" id="SSF54980">
    <property type="entry name" value="EF-G C-terminal domain-like"/>
    <property type="match status" value="1"/>
</dbReference>
<dbReference type="SUPFAM" id="SSF52540">
    <property type="entry name" value="P-loop containing nucleoside triphosphate hydrolases"/>
    <property type="match status" value="1"/>
</dbReference>
<dbReference type="SUPFAM" id="SSF50447">
    <property type="entry name" value="Translation proteins"/>
    <property type="match status" value="1"/>
</dbReference>
<dbReference type="PROSITE" id="PS00301">
    <property type="entry name" value="G_TR_1"/>
    <property type="match status" value="1"/>
</dbReference>
<dbReference type="PROSITE" id="PS51722">
    <property type="entry name" value="G_TR_2"/>
    <property type="match status" value="1"/>
</dbReference>
<keyword id="KW-0963">Cytoplasm</keyword>
<keyword id="KW-0342">GTP-binding</keyword>
<keyword id="KW-0547">Nucleotide-binding</keyword>
<keyword id="KW-0648">Protein biosynthesis</keyword>
<keyword id="KW-1185">Reference proteome</keyword>
<reference key="1">
    <citation type="submission" date="2008-02" db="EMBL/GenBank/DDBJ databases">
        <title>Complete sequence of Shewanella woodyi ATCC 51908.</title>
        <authorList>
            <consortium name="US DOE Joint Genome Institute"/>
            <person name="Copeland A."/>
            <person name="Lucas S."/>
            <person name="Lapidus A."/>
            <person name="Glavina del Rio T."/>
            <person name="Dalin E."/>
            <person name="Tice H."/>
            <person name="Bruce D."/>
            <person name="Goodwin L."/>
            <person name="Pitluck S."/>
            <person name="Sims D."/>
            <person name="Brettin T."/>
            <person name="Detter J.C."/>
            <person name="Han C."/>
            <person name="Kuske C.R."/>
            <person name="Schmutz J."/>
            <person name="Larimer F."/>
            <person name="Land M."/>
            <person name="Hauser L."/>
            <person name="Kyrpides N."/>
            <person name="Lykidis A."/>
            <person name="Zhao J.-S."/>
            <person name="Richardson P."/>
        </authorList>
    </citation>
    <scope>NUCLEOTIDE SEQUENCE [LARGE SCALE GENOMIC DNA]</scope>
    <source>
        <strain>ATCC 51908 / MS32</strain>
    </source>
</reference>